<sequence>MLRAALSGSSYVGVFATATDEYLLVRPDIEESLQSEFETELDVTAVPTTIAGSGTVGSLAVGNENGLLVTERVTDRERDRLETETGLPVVELPGNINAAGNVVLANNEGAFVHPDLSRDALSAIEEALSVPVERGRIADVQTVGTAAVVTDDGVLSHPKTTDEKLDFLEELFGVYADIGTINYGGPLVGSGLVANNTGYIAGEETTGPELGRIEDALGFIQ</sequence>
<keyword id="KW-0396">Initiation factor</keyword>
<keyword id="KW-0648">Protein biosynthesis</keyword>
<keyword id="KW-1185">Reference proteome</keyword>
<gene>
    <name evidence="1" type="primary">eif6</name>
    <name type="ordered locus">NP_1016A</name>
</gene>
<comment type="function">
    <text evidence="1">Binds to the 50S ribosomal subunit and prevents its association with the 30S ribosomal subunit to form the 70S initiation complex.</text>
</comment>
<comment type="similarity">
    <text evidence="1">Belongs to the eIF-6 family.</text>
</comment>
<name>IF6_NATPD</name>
<reference key="1">
    <citation type="journal article" date="2005" name="Genome Res.">
        <title>Living with two extremes: conclusions from the genome sequence of Natronomonas pharaonis.</title>
        <authorList>
            <person name="Falb M."/>
            <person name="Pfeiffer F."/>
            <person name="Palm P."/>
            <person name="Rodewald K."/>
            <person name="Hickmann V."/>
            <person name="Tittor J."/>
            <person name="Oesterhelt D."/>
        </authorList>
    </citation>
    <scope>NUCLEOTIDE SEQUENCE [LARGE SCALE GENOMIC DNA]</scope>
    <source>
        <strain>ATCC 35678 / DSM 2160 / CIP 103997 / JCM 8858 / NBRC 14720 / NCIMB 2260 / Gabara</strain>
    </source>
</reference>
<proteinExistence type="inferred from homology"/>
<dbReference type="EMBL" id="CR936257">
    <property type="protein sequence ID" value="CAI48599.1"/>
    <property type="molecule type" value="Genomic_DNA"/>
</dbReference>
<dbReference type="RefSeq" id="WP_011322234.1">
    <property type="nucleotide sequence ID" value="NC_007426.1"/>
</dbReference>
<dbReference type="SMR" id="Q3ITD5"/>
<dbReference type="STRING" id="348780.NP_1016A"/>
<dbReference type="EnsemblBacteria" id="CAI48599">
    <property type="protein sequence ID" value="CAI48599"/>
    <property type="gene ID" value="NP_1016A"/>
</dbReference>
<dbReference type="GeneID" id="3703272"/>
<dbReference type="KEGG" id="nph:NP_1016A"/>
<dbReference type="eggNOG" id="arCOG04176">
    <property type="taxonomic scope" value="Archaea"/>
</dbReference>
<dbReference type="HOGENOM" id="CLU_071894_1_0_2"/>
<dbReference type="OrthoDB" id="33582at2157"/>
<dbReference type="Proteomes" id="UP000002698">
    <property type="component" value="Chromosome"/>
</dbReference>
<dbReference type="GO" id="GO:0043022">
    <property type="term" value="F:ribosome binding"/>
    <property type="evidence" value="ECO:0007669"/>
    <property type="project" value="InterPro"/>
</dbReference>
<dbReference type="GO" id="GO:0003743">
    <property type="term" value="F:translation initiation factor activity"/>
    <property type="evidence" value="ECO:0007669"/>
    <property type="project" value="UniProtKB-UniRule"/>
</dbReference>
<dbReference type="GO" id="GO:0042256">
    <property type="term" value="P:cytosolic ribosome assembly"/>
    <property type="evidence" value="ECO:0007669"/>
    <property type="project" value="InterPro"/>
</dbReference>
<dbReference type="Gene3D" id="3.75.10.10">
    <property type="entry name" value="L-arginine/glycine Amidinotransferase, Chain A"/>
    <property type="match status" value="1"/>
</dbReference>
<dbReference type="HAMAP" id="MF_00032">
    <property type="entry name" value="eIF_6"/>
    <property type="match status" value="1"/>
</dbReference>
<dbReference type="InterPro" id="IPR002769">
    <property type="entry name" value="eIF6"/>
</dbReference>
<dbReference type="NCBIfam" id="TIGR00323">
    <property type="entry name" value="eIF-6"/>
    <property type="match status" value="1"/>
</dbReference>
<dbReference type="NCBIfam" id="NF003128">
    <property type="entry name" value="PRK04046.1-4"/>
    <property type="match status" value="1"/>
</dbReference>
<dbReference type="PANTHER" id="PTHR10784">
    <property type="entry name" value="TRANSLATION INITIATION FACTOR 6"/>
    <property type="match status" value="1"/>
</dbReference>
<dbReference type="Pfam" id="PF01912">
    <property type="entry name" value="eIF-6"/>
    <property type="match status" value="1"/>
</dbReference>
<dbReference type="PIRSF" id="PIRSF006413">
    <property type="entry name" value="IF-6"/>
    <property type="match status" value="1"/>
</dbReference>
<dbReference type="SMART" id="SM00654">
    <property type="entry name" value="eIF6"/>
    <property type="match status" value="1"/>
</dbReference>
<dbReference type="SUPFAM" id="SSF55909">
    <property type="entry name" value="Pentein"/>
    <property type="match status" value="1"/>
</dbReference>
<feature type="chain" id="PRO_0000259432" description="Translation initiation factor 6">
    <location>
        <begin position="1"/>
        <end position="221"/>
    </location>
</feature>
<organism>
    <name type="scientific">Natronomonas pharaonis (strain ATCC 35678 / DSM 2160 / CIP 103997 / JCM 8858 / NBRC 14720 / NCIMB 2260 / Gabara)</name>
    <name type="common">Halobacterium pharaonis</name>
    <dbReference type="NCBI Taxonomy" id="348780"/>
    <lineage>
        <taxon>Archaea</taxon>
        <taxon>Methanobacteriati</taxon>
        <taxon>Methanobacteriota</taxon>
        <taxon>Stenosarchaea group</taxon>
        <taxon>Halobacteria</taxon>
        <taxon>Halobacteriales</taxon>
        <taxon>Haloarculaceae</taxon>
        <taxon>Natronomonas</taxon>
    </lineage>
</organism>
<evidence type="ECO:0000255" key="1">
    <source>
        <dbReference type="HAMAP-Rule" id="MF_00032"/>
    </source>
</evidence>
<protein>
    <recommendedName>
        <fullName evidence="1">Translation initiation factor 6</fullName>
        <shortName evidence="1">aIF-6</shortName>
    </recommendedName>
</protein>
<accession>Q3ITD5</accession>